<gene>
    <name evidence="1" type="primary">carB</name>
    <name type="ordered locus">SPD_1131</name>
</gene>
<comment type="function">
    <text evidence="1">Large subunit of the glutamine-dependent carbamoyl phosphate synthetase (CPSase). CPSase catalyzes the formation of carbamoyl phosphate from the ammonia moiety of glutamine, carbonate, and phosphate donated by ATP, constituting the first step of 2 biosynthetic pathways, one leading to arginine and/or urea and the other to pyrimidine nucleotides. The large subunit (synthetase) binds the substrates ammonia (free or transferred from glutamine from the small subunit), hydrogencarbonate and ATP and carries out an ATP-coupled ligase reaction, activating hydrogencarbonate by forming carboxy phosphate which reacts with ammonia to form carbamoyl phosphate.</text>
</comment>
<comment type="catalytic activity">
    <reaction evidence="1">
        <text>hydrogencarbonate + L-glutamine + 2 ATP + H2O = carbamoyl phosphate + L-glutamate + 2 ADP + phosphate + 2 H(+)</text>
        <dbReference type="Rhea" id="RHEA:18633"/>
        <dbReference type="ChEBI" id="CHEBI:15377"/>
        <dbReference type="ChEBI" id="CHEBI:15378"/>
        <dbReference type="ChEBI" id="CHEBI:17544"/>
        <dbReference type="ChEBI" id="CHEBI:29985"/>
        <dbReference type="ChEBI" id="CHEBI:30616"/>
        <dbReference type="ChEBI" id="CHEBI:43474"/>
        <dbReference type="ChEBI" id="CHEBI:58228"/>
        <dbReference type="ChEBI" id="CHEBI:58359"/>
        <dbReference type="ChEBI" id="CHEBI:456216"/>
        <dbReference type="EC" id="6.3.5.5"/>
    </reaction>
</comment>
<comment type="catalytic activity">
    <molecule>Carbamoyl phosphate synthase large chain</molecule>
    <reaction evidence="1">
        <text>hydrogencarbonate + NH4(+) + 2 ATP = carbamoyl phosphate + 2 ADP + phosphate + 2 H(+)</text>
        <dbReference type="Rhea" id="RHEA:18029"/>
        <dbReference type="ChEBI" id="CHEBI:15378"/>
        <dbReference type="ChEBI" id="CHEBI:17544"/>
        <dbReference type="ChEBI" id="CHEBI:28938"/>
        <dbReference type="ChEBI" id="CHEBI:30616"/>
        <dbReference type="ChEBI" id="CHEBI:43474"/>
        <dbReference type="ChEBI" id="CHEBI:58228"/>
        <dbReference type="ChEBI" id="CHEBI:456216"/>
        <dbReference type="EC" id="6.3.4.16"/>
    </reaction>
</comment>
<comment type="cofactor">
    <cofactor evidence="1">
        <name>Mg(2+)</name>
        <dbReference type="ChEBI" id="CHEBI:18420"/>
    </cofactor>
    <cofactor evidence="1">
        <name>Mn(2+)</name>
        <dbReference type="ChEBI" id="CHEBI:29035"/>
    </cofactor>
    <text evidence="1">Binds 4 Mg(2+) or Mn(2+) ions per subunit.</text>
</comment>
<comment type="pathway">
    <text evidence="1">Amino-acid biosynthesis; L-arginine biosynthesis; carbamoyl phosphate from bicarbonate: step 1/1.</text>
</comment>
<comment type="pathway">
    <text evidence="1">Pyrimidine metabolism; UMP biosynthesis via de novo pathway; (S)-dihydroorotate from bicarbonate: step 1/3.</text>
</comment>
<comment type="subunit">
    <text evidence="1">Composed of two chains; the small (or glutamine) chain promotes the hydrolysis of glutamine to ammonia, which is used by the large (or ammonia) chain to synthesize carbamoyl phosphate. Tetramer of heterodimers (alpha,beta)4.</text>
</comment>
<comment type="domain">
    <text evidence="1">The large subunit is composed of 2 ATP-grasp domains that are involved in binding the 2 ATP molecules needed for carbamoyl phosphate synthesis. The N-terminal ATP-grasp domain (referred to as the carboxyphosphate synthetic component) catalyzes the ATP-dependent phosphorylation of hydrogencarbonate to carboxyphosphate and the subsequent nucleophilic attack by ammonia to form a carbamate intermediate. The C-terminal ATP-grasp domain (referred to as the carbamoyl phosphate synthetic component) then catalyzes the phosphorylation of carbamate with the second ATP to form the end product carbamoyl phosphate. The reactive and unstable enzyme intermediates are sequentially channeled from one active site to the next through the interior of the protein over a distance of at least 96 A.</text>
</comment>
<comment type="similarity">
    <text evidence="1">Belongs to the CarB family.</text>
</comment>
<accession>Q04K48</accession>
<dbReference type="EC" id="6.3.4.16" evidence="1"/>
<dbReference type="EC" id="6.3.5.5" evidence="1"/>
<dbReference type="EMBL" id="CP000410">
    <property type="protein sequence ID" value="ABJ54797.1"/>
    <property type="molecule type" value="Genomic_DNA"/>
</dbReference>
<dbReference type="RefSeq" id="WP_001126406.1">
    <property type="nucleotide sequence ID" value="NZ_JAMLJR010000006.1"/>
</dbReference>
<dbReference type="SMR" id="Q04K48"/>
<dbReference type="PaxDb" id="373153-SPD_1131"/>
<dbReference type="KEGG" id="spd:SPD_1131"/>
<dbReference type="eggNOG" id="COG0458">
    <property type="taxonomic scope" value="Bacteria"/>
</dbReference>
<dbReference type="HOGENOM" id="CLU_000513_1_2_9"/>
<dbReference type="BioCyc" id="SPNE373153:G1G6V-1222-MONOMER"/>
<dbReference type="UniPathway" id="UPA00068">
    <property type="reaction ID" value="UER00171"/>
</dbReference>
<dbReference type="UniPathway" id="UPA00070">
    <property type="reaction ID" value="UER00115"/>
</dbReference>
<dbReference type="Proteomes" id="UP000001452">
    <property type="component" value="Chromosome"/>
</dbReference>
<dbReference type="GO" id="GO:0005737">
    <property type="term" value="C:cytoplasm"/>
    <property type="evidence" value="ECO:0007669"/>
    <property type="project" value="TreeGrafter"/>
</dbReference>
<dbReference type="GO" id="GO:0005524">
    <property type="term" value="F:ATP binding"/>
    <property type="evidence" value="ECO:0007669"/>
    <property type="project" value="UniProtKB-UniRule"/>
</dbReference>
<dbReference type="GO" id="GO:0004087">
    <property type="term" value="F:carbamoyl-phosphate synthase (ammonia) activity"/>
    <property type="evidence" value="ECO:0007669"/>
    <property type="project" value="RHEA"/>
</dbReference>
<dbReference type="GO" id="GO:0004088">
    <property type="term" value="F:carbamoyl-phosphate synthase (glutamine-hydrolyzing) activity"/>
    <property type="evidence" value="ECO:0007669"/>
    <property type="project" value="UniProtKB-UniRule"/>
</dbReference>
<dbReference type="GO" id="GO:0046872">
    <property type="term" value="F:metal ion binding"/>
    <property type="evidence" value="ECO:0007669"/>
    <property type="project" value="UniProtKB-KW"/>
</dbReference>
<dbReference type="GO" id="GO:0044205">
    <property type="term" value="P:'de novo' UMP biosynthetic process"/>
    <property type="evidence" value="ECO:0007669"/>
    <property type="project" value="UniProtKB-UniRule"/>
</dbReference>
<dbReference type="GO" id="GO:0006541">
    <property type="term" value="P:glutamine metabolic process"/>
    <property type="evidence" value="ECO:0007669"/>
    <property type="project" value="TreeGrafter"/>
</dbReference>
<dbReference type="GO" id="GO:0006526">
    <property type="term" value="P:L-arginine biosynthetic process"/>
    <property type="evidence" value="ECO:0007669"/>
    <property type="project" value="UniProtKB-UniRule"/>
</dbReference>
<dbReference type="CDD" id="cd01424">
    <property type="entry name" value="MGS_CPS_II"/>
    <property type="match status" value="1"/>
</dbReference>
<dbReference type="FunFam" id="1.10.1030.10:FF:000002">
    <property type="entry name" value="Carbamoyl-phosphate synthase large chain"/>
    <property type="match status" value="1"/>
</dbReference>
<dbReference type="FunFam" id="3.30.1490.20:FF:000001">
    <property type="entry name" value="Carbamoyl-phosphate synthase large chain"/>
    <property type="match status" value="1"/>
</dbReference>
<dbReference type="FunFam" id="3.30.470.20:FF:000001">
    <property type="entry name" value="Carbamoyl-phosphate synthase large chain"/>
    <property type="match status" value="1"/>
</dbReference>
<dbReference type="FunFam" id="3.30.470.20:FF:000026">
    <property type="entry name" value="Carbamoyl-phosphate synthase large chain"/>
    <property type="match status" value="1"/>
</dbReference>
<dbReference type="FunFam" id="3.40.50.1380:FF:000017">
    <property type="entry name" value="Carbamoyl-phosphate synthase large chain"/>
    <property type="match status" value="1"/>
</dbReference>
<dbReference type="FunFam" id="3.40.50.20:FF:000001">
    <property type="entry name" value="Carbamoyl-phosphate synthase large chain"/>
    <property type="match status" value="2"/>
</dbReference>
<dbReference type="Gene3D" id="3.40.50.20">
    <property type="match status" value="2"/>
</dbReference>
<dbReference type="Gene3D" id="3.30.1490.20">
    <property type="entry name" value="ATP-grasp fold, A domain"/>
    <property type="match status" value="1"/>
</dbReference>
<dbReference type="Gene3D" id="3.30.470.20">
    <property type="entry name" value="ATP-grasp fold, B domain"/>
    <property type="match status" value="2"/>
</dbReference>
<dbReference type="Gene3D" id="1.10.1030.10">
    <property type="entry name" value="Carbamoyl-phosphate synthetase, large subunit oligomerisation domain"/>
    <property type="match status" value="1"/>
</dbReference>
<dbReference type="Gene3D" id="3.40.50.1380">
    <property type="entry name" value="Methylglyoxal synthase-like domain"/>
    <property type="match status" value="1"/>
</dbReference>
<dbReference type="HAMAP" id="MF_01210_B">
    <property type="entry name" value="CPSase_L_chain_B"/>
    <property type="match status" value="1"/>
</dbReference>
<dbReference type="InterPro" id="IPR011761">
    <property type="entry name" value="ATP-grasp"/>
</dbReference>
<dbReference type="InterPro" id="IPR013815">
    <property type="entry name" value="ATP_grasp_subdomain_1"/>
</dbReference>
<dbReference type="InterPro" id="IPR006275">
    <property type="entry name" value="CarbamoylP_synth_lsu"/>
</dbReference>
<dbReference type="InterPro" id="IPR005480">
    <property type="entry name" value="CarbamoylP_synth_lsu_oligo"/>
</dbReference>
<dbReference type="InterPro" id="IPR036897">
    <property type="entry name" value="CarbamoylP_synth_lsu_oligo_sf"/>
</dbReference>
<dbReference type="InterPro" id="IPR005479">
    <property type="entry name" value="CbamoylP_synth_lsu-like_ATP-bd"/>
</dbReference>
<dbReference type="InterPro" id="IPR005483">
    <property type="entry name" value="CbamoylP_synth_lsu_CPSase_dom"/>
</dbReference>
<dbReference type="InterPro" id="IPR011607">
    <property type="entry name" value="MGS-like_dom"/>
</dbReference>
<dbReference type="InterPro" id="IPR036914">
    <property type="entry name" value="MGS-like_dom_sf"/>
</dbReference>
<dbReference type="InterPro" id="IPR033937">
    <property type="entry name" value="MGS_CPS_CarB"/>
</dbReference>
<dbReference type="InterPro" id="IPR016185">
    <property type="entry name" value="PreATP-grasp_dom_sf"/>
</dbReference>
<dbReference type="NCBIfam" id="TIGR01369">
    <property type="entry name" value="CPSaseII_lrg"/>
    <property type="match status" value="1"/>
</dbReference>
<dbReference type="NCBIfam" id="NF003671">
    <property type="entry name" value="PRK05294.1"/>
    <property type="match status" value="1"/>
</dbReference>
<dbReference type="NCBIfam" id="NF009455">
    <property type="entry name" value="PRK12815.1"/>
    <property type="match status" value="1"/>
</dbReference>
<dbReference type="PANTHER" id="PTHR11405:SF53">
    <property type="entry name" value="CARBAMOYL-PHOSPHATE SYNTHASE [AMMONIA], MITOCHONDRIAL"/>
    <property type="match status" value="1"/>
</dbReference>
<dbReference type="PANTHER" id="PTHR11405">
    <property type="entry name" value="CARBAMOYLTRANSFERASE FAMILY MEMBER"/>
    <property type="match status" value="1"/>
</dbReference>
<dbReference type="Pfam" id="PF02786">
    <property type="entry name" value="CPSase_L_D2"/>
    <property type="match status" value="2"/>
</dbReference>
<dbReference type="Pfam" id="PF02787">
    <property type="entry name" value="CPSase_L_D3"/>
    <property type="match status" value="1"/>
</dbReference>
<dbReference type="Pfam" id="PF02142">
    <property type="entry name" value="MGS"/>
    <property type="match status" value="1"/>
</dbReference>
<dbReference type="PRINTS" id="PR00098">
    <property type="entry name" value="CPSASE"/>
</dbReference>
<dbReference type="SMART" id="SM01096">
    <property type="entry name" value="CPSase_L_D3"/>
    <property type="match status" value="1"/>
</dbReference>
<dbReference type="SMART" id="SM01209">
    <property type="entry name" value="GARS_A"/>
    <property type="match status" value="1"/>
</dbReference>
<dbReference type="SMART" id="SM00851">
    <property type="entry name" value="MGS"/>
    <property type="match status" value="1"/>
</dbReference>
<dbReference type="SUPFAM" id="SSF48108">
    <property type="entry name" value="Carbamoyl phosphate synthetase, large subunit connection domain"/>
    <property type="match status" value="1"/>
</dbReference>
<dbReference type="SUPFAM" id="SSF56059">
    <property type="entry name" value="Glutathione synthetase ATP-binding domain-like"/>
    <property type="match status" value="2"/>
</dbReference>
<dbReference type="SUPFAM" id="SSF52335">
    <property type="entry name" value="Methylglyoxal synthase-like"/>
    <property type="match status" value="1"/>
</dbReference>
<dbReference type="SUPFAM" id="SSF52440">
    <property type="entry name" value="PreATP-grasp domain"/>
    <property type="match status" value="2"/>
</dbReference>
<dbReference type="PROSITE" id="PS50975">
    <property type="entry name" value="ATP_GRASP"/>
    <property type="match status" value="2"/>
</dbReference>
<dbReference type="PROSITE" id="PS00866">
    <property type="entry name" value="CPSASE_1"/>
    <property type="match status" value="2"/>
</dbReference>
<dbReference type="PROSITE" id="PS00867">
    <property type="entry name" value="CPSASE_2"/>
    <property type="match status" value="2"/>
</dbReference>
<dbReference type="PROSITE" id="PS51855">
    <property type="entry name" value="MGS"/>
    <property type="match status" value="1"/>
</dbReference>
<keyword id="KW-0028">Amino-acid biosynthesis</keyword>
<keyword id="KW-0055">Arginine biosynthesis</keyword>
<keyword id="KW-0067">ATP-binding</keyword>
<keyword id="KW-0436">Ligase</keyword>
<keyword id="KW-0460">Magnesium</keyword>
<keyword id="KW-0464">Manganese</keyword>
<keyword id="KW-0479">Metal-binding</keyword>
<keyword id="KW-0547">Nucleotide-binding</keyword>
<keyword id="KW-0665">Pyrimidine biosynthesis</keyword>
<keyword id="KW-1185">Reference proteome</keyword>
<keyword id="KW-0677">Repeat</keyword>
<organism>
    <name type="scientific">Streptococcus pneumoniae serotype 2 (strain D39 / NCTC 7466)</name>
    <dbReference type="NCBI Taxonomy" id="373153"/>
    <lineage>
        <taxon>Bacteria</taxon>
        <taxon>Bacillati</taxon>
        <taxon>Bacillota</taxon>
        <taxon>Bacilli</taxon>
        <taxon>Lactobacillales</taxon>
        <taxon>Streptococcaceae</taxon>
        <taxon>Streptococcus</taxon>
    </lineage>
</organism>
<name>CARB_STRP2</name>
<feature type="chain" id="PRO_1000066384" description="Carbamoyl phosphate synthase large chain">
    <location>
        <begin position="1"/>
        <end position="1058"/>
    </location>
</feature>
<feature type="domain" description="ATP-grasp 1" evidence="1">
    <location>
        <begin position="133"/>
        <end position="327"/>
    </location>
</feature>
<feature type="domain" description="ATP-grasp 2" evidence="1">
    <location>
        <begin position="671"/>
        <end position="861"/>
    </location>
</feature>
<feature type="domain" description="MGS-like" evidence="1">
    <location>
        <begin position="930"/>
        <end position="1058"/>
    </location>
</feature>
<feature type="region of interest" description="Carboxyphosphate synthetic domain" evidence="1">
    <location>
        <begin position="1"/>
        <end position="401"/>
    </location>
</feature>
<feature type="region of interest" description="Oligomerization domain" evidence="1">
    <location>
        <begin position="402"/>
        <end position="546"/>
    </location>
</feature>
<feature type="region of interest" description="Carbamoyl phosphate synthetic domain" evidence="1">
    <location>
        <begin position="547"/>
        <end position="929"/>
    </location>
</feature>
<feature type="region of interest" description="Allosteric domain" evidence="1">
    <location>
        <begin position="930"/>
        <end position="1058"/>
    </location>
</feature>
<feature type="binding site" evidence="1">
    <location>
        <position position="129"/>
    </location>
    <ligand>
        <name>ATP</name>
        <dbReference type="ChEBI" id="CHEBI:30616"/>
        <label>1</label>
    </ligand>
</feature>
<feature type="binding site" evidence="1">
    <location>
        <position position="169"/>
    </location>
    <ligand>
        <name>ATP</name>
        <dbReference type="ChEBI" id="CHEBI:30616"/>
        <label>1</label>
    </ligand>
</feature>
<feature type="binding site" evidence="1">
    <location>
        <position position="175"/>
    </location>
    <ligand>
        <name>ATP</name>
        <dbReference type="ChEBI" id="CHEBI:30616"/>
        <label>1</label>
    </ligand>
</feature>
<feature type="binding site" evidence="1">
    <location>
        <position position="176"/>
    </location>
    <ligand>
        <name>ATP</name>
        <dbReference type="ChEBI" id="CHEBI:30616"/>
        <label>1</label>
    </ligand>
</feature>
<feature type="binding site" evidence="1">
    <location>
        <position position="208"/>
    </location>
    <ligand>
        <name>ATP</name>
        <dbReference type="ChEBI" id="CHEBI:30616"/>
        <label>1</label>
    </ligand>
</feature>
<feature type="binding site" evidence="1">
    <location>
        <position position="210"/>
    </location>
    <ligand>
        <name>ATP</name>
        <dbReference type="ChEBI" id="CHEBI:30616"/>
        <label>1</label>
    </ligand>
</feature>
<feature type="binding site" evidence="1">
    <location>
        <position position="215"/>
    </location>
    <ligand>
        <name>ATP</name>
        <dbReference type="ChEBI" id="CHEBI:30616"/>
        <label>1</label>
    </ligand>
</feature>
<feature type="binding site" evidence="1">
    <location>
        <position position="241"/>
    </location>
    <ligand>
        <name>ATP</name>
        <dbReference type="ChEBI" id="CHEBI:30616"/>
        <label>1</label>
    </ligand>
</feature>
<feature type="binding site" evidence="1">
    <location>
        <position position="242"/>
    </location>
    <ligand>
        <name>ATP</name>
        <dbReference type="ChEBI" id="CHEBI:30616"/>
        <label>1</label>
    </ligand>
</feature>
<feature type="binding site" evidence="1">
    <location>
        <position position="243"/>
    </location>
    <ligand>
        <name>ATP</name>
        <dbReference type="ChEBI" id="CHEBI:30616"/>
        <label>1</label>
    </ligand>
</feature>
<feature type="binding site" evidence="1">
    <location>
        <position position="284"/>
    </location>
    <ligand>
        <name>ATP</name>
        <dbReference type="ChEBI" id="CHEBI:30616"/>
        <label>1</label>
    </ligand>
</feature>
<feature type="binding site" evidence="1">
    <location>
        <position position="284"/>
    </location>
    <ligand>
        <name>Mg(2+)</name>
        <dbReference type="ChEBI" id="CHEBI:18420"/>
        <label>1</label>
    </ligand>
</feature>
<feature type="binding site" evidence="1">
    <location>
        <position position="284"/>
    </location>
    <ligand>
        <name>Mn(2+)</name>
        <dbReference type="ChEBI" id="CHEBI:29035"/>
        <label>1</label>
    </ligand>
</feature>
<feature type="binding site" evidence="1">
    <location>
        <position position="298"/>
    </location>
    <ligand>
        <name>ATP</name>
        <dbReference type="ChEBI" id="CHEBI:30616"/>
        <label>1</label>
    </ligand>
</feature>
<feature type="binding site" evidence="1">
    <location>
        <position position="298"/>
    </location>
    <ligand>
        <name>Mg(2+)</name>
        <dbReference type="ChEBI" id="CHEBI:18420"/>
        <label>1</label>
    </ligand>
</feature>
<feature type="binding site" evidence="1">
    <location>
        <position position="298"/>
    </location>
    <ligand>
        <name>Mg(2+)</name>
        <dbReference type="ChEBI" id="CHEBI:18420"/>
        <label>2</label>
    </ligand>
</feature>
<feature type="binding site" evidence="1">
    <location>
        <position position="298"/>
    </location>
    <ligand>
        <name>Mn(2+)</name>
        <dbReference type="ChEBI" id="CHEBI:29035"/>
        <label>1</label>
    </ligand>
</feature>
<feature type="binding site" evidence="1">
    <location>
        <position position="298"/>
    </location>
    <ligand>
        <name>Mn(2+)</name>
        <dbReference type="ChEBI" id="CHEBI:29035"/>
        <label>2</label>
    </ligand>
</feature>
<feature type="binding site" evidence="1">
    <location>
        <position position="300"/>
    </location>
    <ligand>
        <name>Mg(2+)</name>
        <dbReference type="ChEBI" id="CHEBI:18420"/>
        <label>2</label>
    </ligand>
</feature>
<feature type="binding site" evidence="1">
    <location>
        <position position="300"/>
    </location>
    <ligand>
        <name>Mn(2+)</name>
        <dbReference type="ChEBI" id="CHEBI:29035"/>
        <label>2</label>
    </ligand>
</feature>
<feature type="binding site" evidence="1">
    <location>
        <position position="707"/>
    </location>
    <ligand>
        <name>ATP</name>
        <dbReference type="ChEBI" id="CHEBI:30616"/>
        <label>2</label>
    </ligand>
</feature>
<feature type="binding site" evidence="1">
    <location>
        <position position="746"/>
    </location>
    <ligand>
        <name>ATP</name>
        <dbReference type="ChEBI" id="CHEBI:30616"/>
        <label>2</label>
    </ligand>
</feature>
<feature type="binding site" evidence="1">
    <location>
        <position position="748"/>
    </location>
    <ligand>
        <name>ATP</name>
        <dbReference type="ChEBI" id="CHEBI:30616"/>
        <label>2</label>
    </ligand>
</feature>
<feature type="binding site" evidence="1">
    <location>
        <position position="752"/>
    </location>
    <ligand>
        <name>ATP</name>
        <dbReference type="ChEBI" id="CHEBI:30616"/>
        <label>2</label>
    </ligand>
</feature>
<feature type="binding site" evidence="1">
    <location>
        <position position="777"/>
    </location>
    <ligand>
        <name>ATP</name>
        <dbReference type="ChEBI" id="CHEBI:30616"/>
        <label>2</label>
    </ligand>
</feature>
<feature type="binding site" evidence="1">
    <location>
        <position position="778"/>
    </location>
    <ligand>
        <name>ATP</name>
        <dbReference type="ChEBI" id="CHEBI:30616"/>
        <label>2</label>
    </ligand>
</feature>
<feature type="binding site" evidence="1">
    <location>
        <position position="779"/>
    </location>
    <ligand>
        <name>ATP</name>
        <dbReference type="ChEBI" id="CHEBI:30616"/>
        <label>2</label>
    </ligand>
</feature>
<feature type="binding site" evidence="1">
    <location>
        <position position="780"/>
    </location>
    <ligand>
        <name>ATP</name>
        <dbReference type="ChEBI" id="CHEBI:30616"/>
        <label>2</label>
    </ligand>
</feature>
<feature type="binding site" evidence="1">
    <location>
        <position position="820"/>
    </location>
    <ligand>
        <name>ATP</name>
        <dbReference type="ChEBI" id="CHEBI:30616"/>
        <label>2</label>
    </ligand>
</feature>
<feature type="binding site" evidence="1">
    <location>
        <position position="820"/>
    </location>
    <ligand>
        <name>Mg(2+)</name>
        <dbReference type="ChEBI" id="CHEBI:18420"/>
        <label>3</label>
    </ligand>
</feature>
<feature type="binding site" evidence="1">
    <location>
        <position position="820"/>
    </location>
    <ligand>
        <name>Mn(2+)</name>
        <dbReference type="ChEBI" id="CHEBI:29035"/>
        <label>3</label>
    </ligand>
</feature>
<feature type="binding site" evidence="1">
    <location>
        <position position="832"/>
    </location>
    <ligand>
        <name>ATP</name>
        <dbReference type="ChEBI" id="CHEBI:30616"/>
        <label>2</label>
    </ligand>
</feature>
<feature type="binding site" evidence="1">
    <location>
        <position position="832"/>
    </location>
    <ligand>
        <name>Mg(2+)</name>
        <dbReference type="ChEBI" id="CHEBI:18420"/>
        <label>3</label>
    </ligand>
</feature>
<feature type="binding site" evidence="1">
    <location>
        <position position="832"/>
    </location>
    <ligand>
        <name>Mg(2+)</name>
        <dbReference type="ChEBI" id="CHEBI:18420"/>
        <label>4</label>
    </ligand>
</feature>
<feature type="binding site" evidence="1">
    <location>
        <position position="832"/>
    </location>
    <ligand>
        <name>Mn(2+)</name>
        <dbReference type="ChEBI" id="CHEBI:29035"/>
        <label>3</label>
    </ligand>
</feature>
<feature type="binding site" evidence="1">
    <location>
        <position position="832"/>
    </location>
    <ligand>
        <name>Mn(2+)</name>
        <dbReference type="ChEBI" id="CHEBI:29035"/>
        <label>4</label>
    </ligand>
</feature>
<feature type="binding site" evidence="1">
    <location>
        <position position="834"/>
    </location>
    <ligand>
        <name>Mg(2+)</name>
        <dbReference type="ChEBI" id="CHEBI:18420"/>
        <label>4</label>
    </ligand>
</feature>
<feature type="binding site" evidence="1">
    <location>
        <position position="834"/>
    </location>
    <ligand>
        <name>Mn(2+)</name>
        <dbReference type="ChEBI" id="CHEBI:29035"/>
        <label>4</label>
    </ligand>
</feature>
<reference key="1">
    <citation type="journal article" date="2007" name="J. Bacteriol.">
        <title>Genome sequence of Avery's virulent serotype 2 strain D39 of Streptococcus pneumoniae and comparison with that of unencapsulated laboratory strain R6.</title>
        <authorList>
            <person name="Lanie J.A."/>
            <person name="Ng W.-L."/>
            <person name="Kazmierczak K.M."/>
            <person name="Andrzejewski T.M."/>
            <person name="Davidsen T.M."/>
            <person name="Wayne K.J."/>
            <person name="Tettelin H."/>
            <person name="Glass J.I."/>
            <person name="Winkler M.E."/>
        </authorList>
    </citation>
    <scope>NUCLEOTIDE SEQUENCE [LARGE SCALE GENOMIC DNA]</scope>
    <source>
        <strain>D39 / NCTC 7466</strain>
    </source>
</reference>
<proteinExistence type="inferred from homology"/>
<protein>
    <recommendedName>
        <fullName evidence="1">Carbamoyl phosphate synthase large chain</fullName>
        <ecNumber evidence="1">6.3.4.16</ecNumber>
        <ecNumber evidence="1">6.3.5.5</ecNumber>
    </recommendedName>
    <alternativeName>
        <fullName evidence="1">Carbamoyl phosphate synthetase ammonia chain</fullName>
    </alternativeName>
</protein>
<sequence length="1058" mass="116059">MPKRTDIQKIMVIGSGPIIIGQAAEFDYAGTQACLSLKEEGYEVVLVNSNPATIMTDKEIADKVYIEPITLEFVTRILRKEGPDALLPTLGGQTGLNMAMELSKNGILDELGVELLGTKLSAIDQAEDRDLFKQLMEELEQPIPESEIVNTVEEAVAFAATIGYPVIVRPAFTLGGTGGGMCANEKELREITENGLKLSPVTQCLIERSIAGFKEIEYEVMRDSADNALVVCNMENFDPVGIHTGDSIVFAPAQTMSDYENQMLRDASLSIIRALKIEGGCNVQLALDPNSFKYYVIEVNPRVSRSSALASKATGYPIAKLAAKIAVGLTLDEVINPVTGSTYAMFEPALDYVVAKIPRFPFDKFEKGERRLGTQMKATGEVMAIGRNIEESLLKACRSLEIGVHHNEIPELAAVSDDALIEKVVKAQDDRLFYVSEAIRRGYTPEEIAELTKIDIFYLDKLLHIFEIEQELGAHPQDLEVLKTAKLNGFSDRKIAELWGTTDDKVRQLRLENKIVPVYKMVDTCAAEFDSETPYFYSTYGWENESIRSDKESVLVLGSGPIRIGQGVEFDYATVHSVKAIQAAGYEAIIMNSNPETVSTDFSVSDKLYFEPLTFEDVMNVIDLEQPKGVIVQFGGQTAINLAEPLAKAGVTILGTQVADLDRAEDRDLFEQALKELDIPQPPGQTATNEEEAALAARKIGFPVLVRPSYVLGGRAMEIVENEEDLRSYMRTAVKASPDHPVLVDSYIVGQECEVDAISDGKNVLIPGIMEHIERAGVHSGDSMAVYPPQTLSQKVQETIADYTKRLAIGLHCLGMMNIQFVIKDEKVYVIEVNPRASRTVPFLSKVTNIPMAQVATKLILGQSLSELGYQNGLYPESTRVHIKAPVFSFTKLAKVDSLLGPEMKSTGEVMGSDATLEKALYKAFEASYLHLPTFGNVVFTIADDAKEEALNLARRFQNIGYGILATEGTAAFFASHGLQAQPVGKIGDDDKDIPSFVRKGRIQAIINTVGTKRTADEDGEQIRRSAIEHGVPLFTALDTANAMLKVLESRSFVTEAI</sequence>
<evidence type="ECO:0000255" key="1">
    <source>
        <dbReference type="HAMAP-Rule" id="MF_01210"/>
    </source>
</evidence>